<feature type="chain" id="PRO_0000269587" description="Hemin import ATP-binding protein HmuV">
    <location>
        <begin position="1"/>
        <end position="277"/>
    </location>
</feature>
<feature type="domain" description="ABC transporter" evidence="1">
    <location>
        <begin position="19"/>
        <end position="259"/>
    </location>
</feature>
<feature type="binding site" evidence="1">
    <location>
        <begin position="51"/>
        <end position="58"/>
    </location>
    <ligand>
        <name>ATP</name>
        <dbReference type="ChEBI" id="CHEBI:30616"/>
    </ligand>
</feature>
<accession>Q1J255</accession>
<organism>
    <name type="scientific">Deinococcus geothermalis (strain DSM 11300 / CIP 105573 / AG-3a)</name>
    <dbReference type="NCBI Taxonomy" id="319795"/>
    <lineage>
        <taxon>Bacteria</taxon>
        <taxon>Thermotogati</taxon>
        <taxon>Deinococcota</taxon>
        <taxon>Deinococci</taxon>
        <taxon>Deinococcales</taxon>
        <taxon>Deinococcaceae</taxon>
        <taxon>Deinococcus</taxon>
    </lineage>
</organism>
<comment type="function">
    <text evidence="1">Part of the ABC transporter complex HmuTUV involved in hemin import. Responsible for energy coupling to the transport system.</text>
</comment>
<comment type="subunit">
    <text evidence="1">The complex is composed of two ATP-binding proteins (HmuV), two transmembrane proteins (HmuU) and a solute-binding protein (HmuT).</text>
</comment>
<comment type="subcellular location">
    <subcellularLocation>
        <location evidence="1">Cell membrane</location>
        <topology evidence="1">Peripheral membrane protein</topology>
    </subcellularLocation>
</comment>
<comment type="similarity">
    <text evidence="1">Belongs to the ABC transporter superfamily. Heme (hemin) importer (TC 3.A.1.14.5) family.</text>
</comment>
<name>HMUV_DEIGD</name>
<dbReference type="EC" id="7.6.2.-" evidence="1"/>
<dbReference type="EMBL" id="CP000359">
    <property type="protein sequence ID" value="ABF44429.1"/>
    <property type="molecule type" value="Genomic_DNA"/>
</dbReference>
<dbReference type="SMR" id="Q1J255"/>
<dbReference type="STRING" id="319795.Dgeo_0126"/>
<dbReference type="KEGG" id="dge:Dgeo_0126"/>
<dbReference type="eggNOG" id="COG4559">
    <property type="taxonomic scope" value="Bacteria"/>
</dbReference>
<dbReference type="HOGENOM" id="CLU_000604_1_11_0"/>
<dbReference type="Proteomes" id="UP000002431">
    <property type="component" value="Chromosome"/>
</dbReference>
<dbReference type="GO" id="GO:0005886">
    <property type="term" value="C:plasma membrane"/>
    <property type="evidence" value="ECO:0007669"/>
    <property type="project" value="UniProtKB-SubCell"/>
</dbReference>
<dbReference type="GO" id="GO:0005524">
    <property type="term" value="F:ATP binding"/>
    <property type="evidence" value="ECO:0007669"/>
    <property type="project" value="UniProtKB-KW"/>
</dbReference>
<dbReference type="GO" id="GO:0016887">
    <property type="term" value="F:ATP hydrolysis activity"/>
    <property type="evidence" value="ECO:0007669"/>
    <property type="project" value="InterPro"/>
</dbReference>
<dbReference type="Gene3D" id="3.40.50.300">
    <property type="entry name" value="P-loop containing nucleotide triphosphate hydrolases"/>
    <property type="match status" value="1"/>
</dbReference>
<dbReference type="InterPro" id="IPR003593">
    <property type="entry name" value="AAA+_ATPase"/>
</dbReference>
<dbReference type="InterPro" id="IPR003439">
    <property type="entry name" value="ABC_transporter-like_ATP-bd"/>
</dbReference>
<dbReference type="InterPro" id="IPR027417">
    <property type="entry name" value="P-loop_NTPase"/>
</dbReference>
<dbReference type="NCBIfam" id="NF010068">
    <property type="entry name" value="PRK13548.1"/>
    <property type="match status" value="1"/>
</dbReference>
<dbReference type="PANTHER" id="PTHR42794">
    <property type="entry name" value="HEMIN IMPORT ATP-BINDING PROTEIN HMUV"/>
    <property type="match status" value="1"/>
</dbReference>
<dbReference type="PANTHER" id="PTHR42794:SF1">
    <property type="entry name" value="HEMIN IMPORT ATP-BINDING PROTEIN HMUV"/>
    <property type="match status" value="1"/>
</dbReference>
<dbReference type="Pfam" id="PF00005">
    <property type="entry name" value="ABC_tran"/>
    <property type="match status" value="1"/>
</dbReference>
<dbReference type="SMART" id="SM00382">
    <property type="entry name" value="AAA"/>
    <property type="match status" value="1"/>
</dbReference>
<dbReference type="SUPFAM" id="SSF52540">
    <property type="entry name" value="P-loop containing nucleoside triphosphate hydrolases"/>
    <property type="match status" value="1"/>
</dbReference>
<dbReference type="PROSITE" id="PS50893">
    <property type="entry name" value="ABC_TRANSPORTER_2"/>
    <property type="match status" value="1"/>
</dbReference>
<dbReference type="PROSITE" id="PS51261">
    <property type="entry name" value="HMUV"/>
    <property type="match status" value="1"/>
</dbReference>
<proteinExistence type="inferred from homology"/>
<evidence type="ECO:0000255" key="1">
    <source>
        <dbReference type="HAMAP-Rule" id="MF_01718"/>
    </source>
</evidence>
<keyword id="KW-0067">ATP-binding</keyword>
<keyword id="KW-1003">Cell membrane</keyword>
<keyword id="KW-0472">Membrane</keyword>
<keyword id="KW-0547">Nucleotide-binding</keyword>
<keyword id="KW-1278">Translocase</keyword>
<keyword id="KW-0813">Transport</keyword>
<reference key="1">
    <citation type="submission" date="2006-04" db="EMBL/GenBank/DDBJ databases">
        <title>Complete sequence of chromosome of Deinococcus geothermalis DSM 11300.</title>
        <authorList>
            <person name="Copeland A."/>
            <person name="Lucas S."/>
            <person name="Lapidus A."/>
            <person name="Barry K."/>
            <person name="Detter J.C."/>
            <person name="Glavina del Rio T."/>
            <person name="Hammon N."/>
            <person name="Israni S."/>
            <person name="Dalin E."/>
            <person name="Tice H."/>
            <person name="Pitluck S."/>
            <person name="Brettin T."/>
            <person name="Bruce D."/>
            <person name="Han C."/>
            <person name="Tapia R."/>
            <person name="Saunders E."/>
            <person name="Gilna P."/>
            <person name="Schmutz J."/>
            <person name="Larimer F."/>
            <person name="Land M."/>
            <person name="Hauser L."/>
            <person name="Kyrpides N."/>
            <person name="Kim E."/>
            <person name="Daly M.J."/>
            <person name="Fredrickson J.K."/>
            <person name="Makarova K.S."/>
            <person name="Gaidamakova E.K."/>
            <person name="Zhai M."/>
            <person name="Richardson P."/>
        </authorList>
    </citation>
    <scope>NUCLEOTIDE SEQUENCE [LARGE SCALE GENOMIC DNA]</scope>
    <source>
        <strain>DSM 11300 / CIP 105573 / AG-3a</strain>
    </source>
</reference>
<sequence>MRRLVRKTVSLPPSGAPLVEVADLNYSVSGRELLRNITFRLTDGELLAVLGRNGAGKSTLLRHLTGELGKEGVRMFGQPLREYAAADLARRRAALPQQTPLTFAYEVLDVVLLGRIPHGRRETPEDREIARAALARVGLAGFEHRNILTLSGGEQQRVHLARVLAQLWADPAAPEQPARVLLLDEPTSSLDLAHQHATLRLARELCTQGVGVIAVLHDLNLAAQYADRVLIVAGGRVTALGTPEAVLTPAIIEEAFGHRVAVTPHPCLNCPLIVSAQ</sequence>
<protein>
    <recommendedName>
        <fullName evidence="1">Hemin import ATP-binding protein HmuV</fullName>
        <ecNumber evidence="1">7.6.2.-</ecNumber>
    </recommendedName>
</protein>
<gene>
    <name evidence="1" type="primary">hmuV</name>
    <name type="ordered locus">Dgeo_0126</name>
</gene>